<keyword id="KW-0025">Alternative splicing</keyword>
<keyword id="KW-0072">Autophagy</keyword>
<keyword id="KW-0256">Endoplasmic reticulum</keyword>
<keyword id="KW-0333">Golgi apparatus</keyword>
<keyword id="KW-0472">Membrane</keyword>
<keyword id="KW-0597">Phosphoprotein</keyword>
<keyword id="KW-1185">Reference proteome</keyword>
<keyword id="KW-0812">Transmembrane</keyword>
<keyword id="KW-1133">Transmembrane helix</keyword>
<proteinExistence type="evidence at transcript level"/>
<name>RETR1_BOVIN</name>
<accession>Q5E9K8</accession>
<accession>A5PJF3</accession>
<organism>
    <name type="scientific">Bos taurus</name>
    <name type="common">Bovine</name>
    <dbReference type="NCBI Taxonomy" id="9913"/>
    <lineage>
        <taxon>Eukaryota</taxon>
        <taxon>Metazoa</taxon>
        <taxon>Chordata</taxon>
        <taxon>Craniata</taxon>
        <taxon>Vertebrata</taxon>
        <taxon>Euteleostomi</taxon>
        <taxon>Mammalia</taxon>
        <taxon>Eutheria</taxon>
        <taxon>Laurasiatheria</taxon>
        <taxon>Artiodactyla</taxon>
        <taxon>Ruminantia</taxon>
        <taxon>Pecora</taxon>
        <taxon>Bovidae</taxon>
        <taxon>Bovinae</taxon>
        <taxon>Bos</taxon>
    </lineage>
</organism>
<feature type="chain" id="PRO_0000288465" description="Reticulophagy regulator 1">
    <location>
        <begin position="1"/>
        <end position="493"/>
    </location>
</feature>
<feature type="topological domain" description="Cytoplasmic" evidence="2">
    <location>
        <begin position="1"/>
        <end position="55"/>
    </location>
</feature>
<feature type="transmembrane region" description="Helical" evidence="3">
    <location>
        <begin position="56"/>
        <end position="76"/>
    </location>
</feature>
<feature type="topological domain" description="Lumenal" evidence="5">
    <location>
        <begin position="77"/>
        <end position="87"/>
    </location>
</feature>
<feature type="transmembrane region" description="Helical" evidence="3">
    <location>
        <begin position="88"/>
        <end position="108"/>
    </location>
</feature>
<feature type="topological domain" description="Cytoplasmic" evidence="5">
    <location>
        <begin position="109"/>
        <end position="114"/>
    </location>
</feature>
<feature type="transmembrane region" description="Helical" evidence="3">
    <location>
        <begin position="115"/>
        <end position="135"/>
    </location>
</feature>
<feature type="topological domain" description="Lumenal" evidence="5">
    <location>
        <begin position="136"/>
        <end position="204"/>
    </location>
</feature>
<feature type="transmembrane region" description="Helical" evidence="3">
    <location>
        <begin position="205"/>
        <end position="225"/>
    </location>
</feature>
<feature type="topological domain" description="Cytoplasmic" evidence="2">
    <location>
        <begin position="226"/>
        <end position="493"/>
    </location>
</feature>
<feature type="region of interest" description="Disordered" evidence="4">
    <location>
        <begin position="1"/>
        <end position="52"/>
    </location>
</feature>
<feature type="region of interest" description="Reticulon homology domain" evidence="2">
    <location>
        <begin position="80"/>
        <end position="229"/>
    </location>
</feature>
<feature type="region of interest" description="Disordered" evidence="4">
    <location>
        <begin position="315"/>
        <end position="394"/>
    </location>
</feature>
<feature type="region of interest" description="Disordered" evidence="4">
    <location>
        <begin position="435"/>
        <end position="493"/>
    </location>
</feature>
<feature type="short sequence motif" description="LIR motif" evidence="2">
    <location>
        <begin position="449"/>
        <end position="454"/>
    </location>
</feature>
<feature type="compositionally biased region" description="Low complexity" evidence="4">
    <location>
        <begin position="37"/>
        <end position="52"/>
    </location>
</feature>
<feature type="compositionally biased region" description="Polar residues" evidence="4">
    <location>
        <begin position="315"/>
        <end position="326"/>
    </location>
</feature>
<feature type="compositionally biased region" description="Basic and acidic residues" evidence="4">
    <location>
        <begin position="330"/>
        <end position="344"/>
    </location>
</feature>
<feature type="compositionally biased region" description="Basic and acidic residues" evidence="4">
    <location>
        <begin position="368"/>
        <end position="388"/>
    </location>
</feature>
<feature type="compositionally biased region" description="Acidic residues" evidence="4">
    <location>
        <begin position="441"/>
        <end position="463"/>
    </location>
</feature>
<feature type="compositionally biased region" description="Polar residues" evidence="4">
    <location>
        <begin position="467"/>
        <end position="486"/>
    </location>
</feature>
<feature type="modified residue" description="Phosphoserine" evidence="2">
    <location>
        <position position="145"/>
    </location>
</feature>
<feature type="modified residue" description="Phosphoserine; by CAMK2B" evidence="2">
    <location>
        <position position="147"/>
    </location>
</feature>
<feature type="modified residue" description="Phosphoserine" evidence="2">
    <location>
        <position position="149"/>
    </location>
</feature>
<feature type="modified residue" description="Phosphothreonine" evidence="1">
    <location>
        <position position="353"/>
    </location>
</feature>
<feature type="splice variant" id="VSP_057835" description="In isoform 2.">
    <original>MASPAPPEPAEQGSPALAAAPQAPPPPTRAPPEEPEGAAPPEEGAAAGAGRQVEEAAGGVAAVVTWLLGEPALWLGGRADELLSWKRPLHSLLAFVGANLVFWFLALTPWRVYHLISVMILTRVIMQIIKDMILSRTRGAQLWRSLSE</original>
    <variation>MPEGEDFGPGK</variation>
    <location>
        <begin position="1"/>
        <end position="148"/>
    </location>
</feature>
<protein>
    <recommendedName>
        <fullName>Reticulophagy regulator 1</fullName>
    </recommendedName>
    <alternativeName>
        <fullName evidence="5">Reticulophagy receptor 1</fullName>
    </alternativeName>
</protein>
<sequence length="493" mass="53680">MASPAPPEPAEQGSPALAAAPQAPPPPTRAPPEEPEGAAPPEEGAAAGAGRQVEEAAGGVAAVVTWLLGEPALWLGGRADELLSWKRPLHSLLAFVGANLVFWFLALTPWRVYHLISVMILTRVIMQIIKDMILSRTRGAQLWRSLSESWEVINSKPDERPGFSHCLAESWMNFSIFLQEMSVFKQQSPGKFCLLVCSVCTFFTILGSYIPGVILSYLLLLCAFLCPLFKCNDIGQKIYSKIKSCLLKLDFGIREYINQKKRERSEADKEKSHKDDSELDFSALCPKISLTTAAKELSVSDTDVSEVSWTDNGTFNLSEGYTPQTDTSDDLDRPSEEVFSRDLSDFPSLENGTGTNDEDELSLGLPTELKRKKEQLDGGPRRSTEKKSAAGLSLPLSSDQTLHLMSDLAGDVITAAVTAAVKDQLAGVRQALSQAAPSLGEDTDTEEGDDFELLDQSELDQIESELGLSQDQEAEAQQNKKSSGFLSNLLGGH</sequence>
<dbReference type="EMBL" id="BT020912">
    <property type="protein sequence ID" value="AAX08929.1"/>
    <property type="molecule type" value="mRNA"/>
</dbReference>
<dbReference type="EMBL" id="BC102079">
    <property type="protein sequence ID" value="AAI02080.1"/>
    <property type="molecule type" value="mRNA"/>
</dbReference>
<dbReference type="EMBL" id="BC142089">
    <property type="protein sequence ID" value="AAI42090.1"/>
    <property type="molecule type" value="mRNA"/>
</dbReference>
<dbReference type="RefSeq" id="NP_001015672.1">
    <molecule id="Q5E9K8-2"/>
    <property type="nucleotide sequence ID" value="NM_001015672.2"/>
</dbReference>
<dbReference type="SMR" id="Q5E9K8"/>
<dbReference type="FunCoup" id="Q5E9K8">
    <property type="interactions" value="134"/>
</dbReference>
<dbReference type="STRING" id="9913.ENSBTAP00000043722"/>
<dbReference type="PaxDb" id="9913-ENSBTAP00000021862"/>
<dbReference type="Ensembl" id="ENSBTAT00000021862.4">
    <molecule id="Q5E9K8-2"/>
    <property type="protein sequence ID" value="ENSBTAP00000021862.3"/>
    <property type="gene ID" value="ENSBTAG00000016444.7"/>
</dbReference>
<dbReference type="GeneID" id="540068"/>
<dbReference type="KEGG" id="bta:540068"/>
<dbReference type="CTD" id="54463"/>
<dbReference type="VEuPathDB" id="HostDB:ENSBTAG00000016444"/>
<dbReference type="eggNOG" id="ENOG502QPW8">
    <property type="taxonomic scope" value="Eukaryota"/>
</dbReference>
<dbReference type="GeneTree" id="ENSGT00940000160746"/>
<dbReference type="InParanoid" id="Q5E9K8"/>
<dbReference type="OrthoDB" id="10029527at2759"/>
<dbReference type="TreeFam" id="TF329111"/>
<dbReference type="Proteomes" id="UP000009136">
    <property type="component" value="Chromosome 20"/>
</dbReference>
<dbReference type="Bgee" id="ENSBTAG00000016444">
    <property type="expression patterns" value="Expressed in gluteal muscle and 108 other cell types or tissues"/>
</dbReference>
<dbReference type="GO" id="GO:0005801">
    <property type="term" value="C:cis-Golgi network"/>
    <property type="evidence" value="ECO:0000250"/>
    <property type="project" value="UniProtKB"/>
</dbReference>
<dbReference type="GO" id="GO:0005789">
    <property type="term" value="C:endoplasmic reticulum membrane"/>
    <property type="evidence" value="ECO:0000250"/>
    <property type="project" value="GO_Central"/>
</dbReference>
<dbReference type="GO" id="GO:0043524">
    <property type="term" value="P:negative regulation of neuron apoptotic process"/>
    <property type="evidence" value="ECO:0000250"/>
    <property type="project" value="GO_Central"/>
</dbReference>
<dbReference type="GO" id="GO:0061709">
    <property type="term" value="P:reticulophagy"/>
    <property type="evidence" value="ECO:0000250"/>
    <property type="project" value="GO_Central"/>
</dbReference>
<dbReference type="GO" id="GO:0019233">
    <property type="term" value="P:sensory perception of pain"/>
    <property type="evidence" value="ECO:0000250"/>
    <property type="project" value="UniProtKB"/>
</dbReference>
<dbReference type="CDD" id="cd22560">
    <property type="entry name" value="RETR1_RHD"/>
    <property type="match status" value="1"/>
</dbReference>
<dbReference type="InterPro" id="IPR055255">
    <property type="entry name" value="RETR1_RHD"/>
</dbReference>
<dbReference type="InterPro" id="IPR043384">
    <property type="entry name" value="RETREG1/3"/>
</dbReference>
<dbReference type="PANTHER" id="PTHR28659">
    <property type="entry name" value="RETICULON-LIKE PROTEIN"/>
    <property type="match status" value="1"/>
</dbReference>
<dbReference type="PANTHER" id="PTHR28659:SF3">
    <property type="entry name" value="RETICULOPHAGY REGULATOR 1"/>
    <property type="match status" value="1"/>
</dbReference>
<dbReference type="Pfam" id="PF24456">
    <property type="entry name" value="RHD_RETREG1-3"/>
    <property type="match status" value="1"/>
</dbReference>
<evidence type="ECO:0000250" key="1">
    <source>
        <dbReference type="UniProtKB" id="Q8VE91"/>
    </source>
</evidence>
<evidence type="ECO:0000250" key="2">
    <source>
        <dbReference type="UniProtKB" id="Q9H6L5"/>
    </source>
</evidence>
<evidence type="ECO:0000255" key="3"/>
<evidence type="ECO:0000256" key="4">
    <source>
        <dbReference type="SAM" id="MobiDB-lite"/>
    </source>
</evidence>
<evidence type="ECO:0000305" key="5"/>
<comment type="function">
    <text evidence="1 2">Endoplasmic reticulum (ER)-anchored autophagy regulator which mediates ER delivery into lysosomes through sequestration into autophagosomes. Promotes membrane remodeling and ER scission via its membrane bending capacity and targets the fragments into autophagosomes via interaction with ATG8 family proteins. Active under basal conditions. Required for collagen quality control in a LIR motif-dependent manner. Required for long-term survival of nociceptive and autonomic ganglion neurons.</text>
</comment>
<comment type="subunit">
    <text evidence="2">Homooligomer; oligomerization is enhanced following endoplasmic reticulum stress and is mediated by the reticulon homology domain (By similarity). Interacts with ATG8 family modifier proteins MAP1LC3A, MAP1LC3B, GABARAP, GABARAPL1 and GABARAPL2.</text>
</comment>
<comment type="subcellular location">
    <subcellularLocation>
        <location evidence="1">Golgi apparatus</location>
        <location evidence="1">cis-Golgi network membrane</location>
        <topology evidence="3">Multi-pass membrane protein</topology>
    </subcellularLocation>
    <subcellularLocation>
        <location evidence="2">Endoplasmic reticulum membrane</location>
        <topology evidence="3">Multi-pass membrane protein</topology>
    </subcellularLocation>
</comment>
<comment type="alternative products">
    <event type="alternative splicing"/>
    <isoform>
        <id>Q5E9K8-1</id>
        <name>1</name>
        <sequence type="displayed"/>
    </isoform>
    <isoform>
        <id>Q5E9K8-2</id>
        <name>2</name>
        <sequence type="described" ref="VSP_057835"/>
    </isoform>
</comment>
<comment type="domain">
    <text evidence="2">The LIR motif interacts with ATG8 family proteins and is necessary to target the ER fragments to autophagosomes for lysosomal degradation.</text>
</comment>
<comment type="domain">
    <text evidence="2 5">The reticulon homology domain provides capacity to bend the membrane and promotes ER scission (By similarity). It is required for homooligomerization (By similarity). This domain does not show relevant similarities with reticulon domains, preventing any domain predictions within the protein sequence.</text>
</comment>
<comment type="PTM">
    <text evidence="2">Phosphorylation at Ser-147 by CAMK2B enhances oligomerization and membrane scission and reticulophagy activity.</text>
</comment>
<comment type="similarity">
    <text evidence="5">Belongs to the RETREG family.</text>
</comment>
<gene>
    <name type="primary">RETREG1</name>
    <name type="synonym">FAM134B</name>
</gene>
<reference key="1">
    <citation type="journal article" date="2005" name="BMC Genomics">
        <title>Characterization of 954 bovine full-CDS cDNA sequences.</title>
        <authorList>
            <person name="Harhay G.P."/>
            <person name="Sonstegard T.S."/>
            <person name="Keele J.W."/>
            <person name="Heaton M.P."/>
            <person name="Clawson M.L."/>
            <person name="Snelling W.M."/>
            <person name="Wiedmann R.T."/>
            <person name="Van Tassell C.P."/>
            <person name="Smith T.P.L."/>
        </authorList>
    </citation>
    <scope>NUCLEOTIDE SEQUENCE [LARGE SCALE MRNA] (ISOFORM 2)</scope>
</reference>
<reference key="2">
    <citation type="submission" date="2005-08" db="EMBL/GenBank/DDBJ databases">
        <authorList>
            <consortium name="NIH - Mammalian Gene Collection (MGC) project"/>
        </authorList>
    </citation>
    <scope>NUCLEOTIDE SEQUENCE [LARGE SCALE MRNA] (ISOFORM 2)</scope>
    <source>
        <strain>Crossbred X Angus</strain>
        <strain>Hereford</strain>
        <tissue>Hypothalamus</tissue>
        <tissue>Ileum</tissue>
    </source>
</reference>